<proteinExistence type="inferred from homology"/>
<gene>
    <name evidence="1" type="primary">serC</name>
    <name type="ordered locus">HD_1382</name>
</gene>
<sequence length="362" mass="40112">MKHVYNFSAGPAMMPKAVLAQAQQELLNWQQQGTSVMEVSHRSNAFMALATQTEQDLRQLYAIPDNYKVLFLQGGAHGQFAAIPMNLIGKKGKALYLISGHWSNRSAQEARNFCEVDQLNILTQDEAGVFSVNQTDFSDIAEQYDYVHYCPNETISGVEIPDIPIVGKAVLVADMSSNILSRNIDISKFGLIYAGAQKNLGPAGITIVIIRQDLIGNAQRATPSIWNYATQVNADSMINTPPTFAWYLCSLVFKHLRAAGGLASVEQRNQQKAALLYQYLDNSHFYHNYVAPQNRSLMNVTFTTNNDELNAKFVAEAAENGLHALKGHKVVGGMRASIYNAMPLDGVEALIEFMQKFAQENR</sequence>
<feature type="chain" id="PRO_0000150173" description="Phosphoserine aminotransferase">
    <location>
        <begin position="1"/>
        <end position="362"/>
    </location>
</feature>
<feature type="binding site" evidence="1">
    <location>
        <position position="42"/>
    </location>
    <ligand>
        <name>L-glutamate</name>
        <dbReference type="ChEBI" id="CHEBI:29985"/>
    </ligand>
</feature>
<feature type="binding site" evidence="1">
    <location>
        <position position="102"/>
    </location>
    <ligand>
        <name>pyridoxal 5'-phosphate</name>
        <dbReference type="ChEBI" id="CHEBI:597326"/>
    </ligand>
</feature>
<feature type="binding site" evidence="1">
    <location>
        <position position="154"/>
    </location>
    <ligand>
        <name>pyridoxal 5'-phosphate</name>
        <dbReference type="ChEBI" id="CHEBI:597326"/>
    </ligand>
</feature>
<feature type="binding site" evidence="1">
    <location>
        <position position="174"/>
    </location>
    <ligand>
        <name>pyridoxal 5'-phosphate</name>
        <dbReference type="ChEBI" id="CHEBI:597326"/>
    </ligand>
</feature>
<feature type="binding site" evidence="1">
    <location>
        <position position="197"/>
    </location>
    <ligand>
        <name>pyridoxal 5'-phosphate</name>
        <dbReference type="ChEBI" id="CHEBI:597326"/>
    </ligand>
</feature>
<feature type="binding site" evidence="1">
    <location>
        <begin position="239"/>
        <end position="240"/>
    </location>
    <ligand>
        <name>pyridoxal 5'-phosphate</name>
        <dbReference type="ChEBI" id="CHEBI:597326"/>
    </ligand>
</feature>
<feature type="modified residue" description="N6-(pyridoxal phosphate)lysine" evidence="1">
    <location>
        <position position="198"/>
    </location>
</feature>
<accession>Q7VLP0</accession>
<comment type="function">
    <text evidence="1">Catalyzes the reversible conversion of 3-phosphohydroxypyruvate to phosphoserine and of 3-hydroxy-2-oxo-4-phosphonooxybutanoate to phosphohydroxythreonine.</text>
</comment>
<comment type="catalytic activity">
    <reaction evidence="1">
        <text>O-phospho-L-serine + 2-oxoglutarate = 3-phosphooxypyruvate + L-glutamate</text>
        <dbReference type="Rhea" id="RHEA:14329"/>
        <dbReference type="ChEBI" id="CHEBI:16810"/>
        <dbReference type="ChEBI" id="CHEBI:18110"/>
        <dbReference type="ChEBI" id="CHEBI:29985"/>
        <dbReference type="ChEBI" id="CHEBI:57524"/>
        <dbReference type="EC" id="2.6.1.52"/>
    </reaction>
</comment>
<comment type="catalytic activity">
    <reaction evidence="1">
        <text>4-(phosphooxy)-L-threonine + 2-oxoglutarate = (R)-3-hydroxy-2-oxo-4-phosphooxybutanoate + L-glutamate</text>
        <dbReference type="Rhea" id="RHEA:16573"/>
        <dbReference type="ChEBI" id="CHEBI:16810"/>
        <dbReference type="ChEBI" id="CHEBI:29985"/>
        <dbReference type="ChEBI" id="CHEBI:58452"/>
        <dbReference type="ChEBI" id="CHEBI:58538"/>
        <dbReference type="EC" id="2.6.1.52"/>
    </reaction>
</comment>
<comment type="cofactor">
    <cofactor evidence="1">
        <name>pyridoxal 5'-phosphate</name>
        <dbReference type="ChEBI" id="CHEBI:597326"/>
    </cofactor>
    <text evidence="1">Binds 1 pyridoxal phosphate per subunit.</text>
</comment>
<comment type="pathway">
    <text evidence="1">Amino-acid biosynthesis; L-serine biosynthesis; L-serine from 3-phospho-D-glycerate: step 2/3.</text>
</comment>
<comment type="pathway">
    <text evidence="1">Cofactor biosynthesis; pyridoxine 5'-phosphate biosynthesis; pyridoxine 5'-phosphate from D-erythrose 4-phosphate: step 3/5.</text>
</comment>
<comment type="subunit">
    <text evidence="1">Homodimer.</text>
</comment>
<comment type="subcellular location">
    <subcellularLocation>
        <location evidence="1">Cytoplasm</location>
    </subcellularLocation>
</comment>
<comment type="similarity">
    <text evidence="1">Belongs to the class-V pyridoxal-phosphate-dependent aminotransferase family. SerC subfamily.</text>
</comment>
<protein>
    <recommendedName>
        <fullName evidence="1">Phosphoserine aminotransferase</fullName>
        <ecNumber evidence="1">2.6.1.52</ecNumber>
    </recommendedName>
    <alternativeName>
        <fullName evidence="1">Phosphohydroxythreonine aminotransferase</fullName>
        <shortName evidence="1">PSAT</shortName>
    </alternativeName>
</protein>
<dbReference type="EC" id="2.6.1.52" evidence="1"/>
<dbReference type="EMBL" id="AE017143">
    <property type="protein sequence ID" value="AAP96195.1"/>
    <property type="molecule type" value="Genomic_DNA"/>
</dbReference>
<dbReference type="RefSeq" id="WP_010945244.1">
    <property type="nucleotide sequence ID" value="NC_002940.2"/>
</dbReference>
<dbReference type="SMR" id="Q7VLP0"/>
<dbReference type="STRING" id="233412.HD_1382"/>
<dbReference type="KEGG" id="hdu:HD_1382"/>
<dbReference type="eggNOG" id="COG1932">
    <property type="taxonomic scope" value="Bacteria"/>
</dbReference>
<dbReference type="HOGENOM" id="CLU_034866_0_2_6"/>
<dbReference type="OrthoDB" id="9809412at2"/>
<dbReference type="UniPathway" id="UPA00135">
    <property type="reaction ID" value="UER00197"/>
</dbReference>
<dbReference type="UniPathway" id="UPA00244">
    <property type="reaction ID" value="UER00311"/>
</dbReference>
<dbReference type="Proteomes" id="UP000001022">
    <property type="component" value="Chromosome"/>
</dbReference>
<dbReference type="GO" id="GO:0005737">
    <property type="term" value="C:cytoplasm"/>
    <property type="evidence" value="ECO:0007669"/>
    <property type="project" value="UniProtKB-SubCell"/>
</dbReference>
<dbReference type="GO" id="GO:0004648">
    <property type="term" value="F:O-phospho-L-serine:2-oxoglutarate aminotransferase activity"/>
    <property type="evidence" value="ECO:0007669"/>
    <property type="project" value="UniProtKB-UniRule"/>
</dbReference>
<dbReference type="GO" id="GO:0030170">
    <property type="term" value="F:pyridoxal phosphate binding"/>
    <property type="evidence" value="ECO:0007669"/>
    <property type="project" value="UniProtKB-UniRule"/>
</dbReference>
<dbReference type="GO" id="GO:0006564">
    <property type="term" value="P:L-serine biosynthetic process"/>
    <property type="evidence" value="ECO:0007669"/>
    <property type="project" value="UniProtKB-UniRule"/>
</dbReference>
<dbReference type="GO" id="GO:0008615">
    <property type="term" value="P:pyridoxine biosynthetic process"/>
    <property type="evidence" value="ECO:0007669"/>
    <property type="project" value="UniProtKB-UniRule"/>
</dbReference>
<dbReference type="CDD" id="cd00611">
    <property type="entry name" value="PSAT_like"/>
    <property type="match status" value="1"/>
</dbReference>
<dbReference type="FunFam" id="3.40.640.10:FF:000010">
    <property type="entry name" value="Phosphoserine aminotransferase"/>
    <property type="match status" value="1"/>
</dbReference>
<dbReference type="FunFam" id="3.90.1150.10:FF:000006">
    <property type="entry name" value="Phosphoserine aminotransferase"/>
    <property type="match status" value="1"/>
</dbReference>
<dbReference type="Gene3D" id="3.90.1150.10">
    <property type="entry name" value="Aspartate Aminotransferase, domain 1"/>
    <property type="match status" value="1"/>
</dbReference>
<dbReference type="Gene3D" id="3.40.640.10">
    <property type="entry name" value="Type I PLP-dependent aspartate aminotransferase-like (Major domain)"/>
    <property type="match status" value="1"/>
</dbReference>
<dbReference type="HAMAP" id="MF_00160">
    <property type="entry name" value="SerC_aminotrans_5"/>
    <property type="match status" value="1"/>
</dbReference>
<dbReference type="InterPro" id="IPR000192">
    <property type="entry name" value="Aminotrans_V_dom"/>
</dbReference>
<dbReference type="InterPro" id="IPR020578">
    <property type="entry name" value="Aminotrans_V_PyrdxlP_BS"/>
</dbReference>
<dbReference type="InterPro" id="IPR022278">
    <property type="entry name" value="Pser_aminoTfrase"/>
</dbReference>
<dbReference type="InterPro" id="IPR015424">
    <property type="entry name" value="PyrdxlP-dep_Trfase"/>
</dbReference>
<dbReference type="InterPro" id="IPR015421">
    <property type="entry name" value="PyrdxlP-dep_Trfase_major"/>
</dbReference>
<dbReference type="InterPro" id="IPR015422">
    <property type="entry name" value="PyrdxlP-dep_Trfase_small"/>
</dbReference>
<dbReference type="NCBIfam" id="NF003764">
    <property type="entry name" value="PRK05355.1"/>
    <property type="match status" value="1"/>
</dbReference>
<dbReference type="NCBIfam" id="TIGR01364">
    <property type="entry name" value="serC_1"/>
    <property type="match status" value="1"/>
</dbReference>
<dbReference type="PANTHER" id="PTHR43247">
    <property type="entry name" value="PHOSPHOSERINE AMINOTRANSFERASE"/>
    <property type="match status" value="1"/>
</dbReference>
<dbReference type="PANTHER" id="PTHR43247:SF1">
    <property type="entry name" value="PHOSPHOSERINE AMINOTRANSFERASE"/>
    <property type="match status" value="1"/>
</dbReference>
<dbReference type="Pfam" id="PF00266">
    <property type="entry name" value="Aminotran_5"/>
    <property type="match status" value="1"/>
</dbReference>
<dbReference type="PIRSF" id="PIRSF000525">
    <property type="entry name" value="SerC"/>
    <property type="match status" value="1"/>
</dbReference>
<dbReference type="SUPFAM" id="SSF53383">
    <property type="entry name" value="PLP-dependent transferases"/>
    <property type="match status" value="1"/>
</dbReference>
<dbReference type="PROSITE" id="PS00595">
    <property type="entry name" value="AA_TRANSFER_CLASS_5"/>
    <property type="match status" value="1"/>
</dbReference>
<keyword id="KW-0028">Amino-acid biosynthesis</keyword>
<keyword id="KW-0032">Aminotransferase</keyword>
<keyword id="KW-0963">Cytoplasm</keyword>
<keyword id="KW-0663">Pyridoxal phosphate</keyword>
<keyword id="KW-0664">Pyridoxine biosynthesis</keyword>
<keyword id="KW-1185">Reference proteome</keyword>
<keyword id="KW-0718">Serine biosynthesis</keyword>
<keyword id="KW-0808">Transferase</keyword>
<organism>
    <name type="scientific">Haemophilus ducreyi (strain 35000HP / ATCC 700724)</name>
    <dbReference type="NCBI Taxonomy" id="233412"/>
    <lineage>
        <taxon>Bacteria</taxon>
        <taxon>Pseudomonadati</taxon>
        <taxon>Pseudomonadota</taxon>
        <taxon>Gammaproteobacteria</taxon>
        <taxon>Pasteurellales</taxon>
        <taxon>Pasteurellaceae</taxon>
        <taxon>Haemophilus</taxon>
    </lineage>
</organism>
<name>SERC_HAEDU</name>
<evidence type="ECO:0000255" key="1">
    <source>
        <dbReference type="HAMAP-Rule" id="MF_00160"/>
    </source>
</evidence>
<reference key="1">
    <citation type="submission" date="2003-06" db="EMBL/GenBank/DDBJ databases">
        <title>The complete genome sequence of Haemophilus ducreyi.</title>
        <authorList>
            <person name="Munson R.S. Jr."/>
            <person name="Ray W.C."/>
            <person name="Mahairas G."/>
            <person name="Sabo P."/>
            <person name="Mungur R."/>
            <person name="Johnson L."/>
            <person name="Nguyen D."/>
            <person name="Wang J."/>
            <person name="Forst C."/>
            <person name="Hood L."/>
        </authorList>
    </citation>
    <scope>NUCLEOTIDE SEQUENCE [LARGE SCALE GENOMIC DNA]</scope>
    <source>
        <strain>35000HP / ATCC 700724</strain>
    </source>
</reference>